<name>PYRB_CLOBA</name>
<proteinExistence type="inferred from homology"/>
<keyword id="KW-0665">Pyrimidine biosynthesis</keyword>
<keyword id="KW-0808">Transferase</keyword>
<reference key="1">
    <citation type="submission" date="2008-05" db="EMBL/GenBank/DDBJ databases">
        <title>Complete genome sequence of Clostridium botulinum E3 str. Alaska E43.</title>
        <authorList>
            <person name="Brinkac L.M."/>
            <person name="Brown J.L."/>
            <person name="Bruce D."/>
            <person name="Detter C."/>
            <person name="Munk C."/>
            <person name="Smith L.A."/>
            <person name="Smith T.J."/>
            <person name="Sutton G."/>
            <person name="Brettin T.S."/>
        </authorList>
    </citation>
    <scope>NUCLEOTIDE SEQUENCE [LARGE SCALE GENOMIC DNA]</scope>
    <source>
        <strain>Alaska E43 / Type E3</strain>
    </source>
</reference>
<sequence length="307" mass="35170">MIKDKHLIDPMDFTVEELKEIFKLAHEIILDPEKFSHVCDGKILGTLFYEPSTRTRFSFEAAMMRLGGKILGFSEPNSSSASKGESLSDTIKMVSIYTDIIAMRHPKEGSAKVASLYSSVPIINAGDGGHQHPTQTLTDLLTIEMLKDGLSNHTIGICGDLKYGRTVHSLIKAMSRYKGNKFLLISPKELRIPDYIREEILRKNNIEFLEVETLEEVIDKVDILYMTRIQKERFFNEEEYLRLRDSYILNKEKMNLAKDDMIVMHPLPRVNEIACEVDYDKRAAYFKQAEYGMYARMALMAKLLGVL</sequence>
<evidence type="ECO:0000255" key="1">
    <source>
        <dbReference type="HAMAP-Rule" id="MF_00001"/>
    </source>
</evidence>
<accession>B2UW93</accession>
<dbReference type="EC" id="2.1.3.2" evidence="1"/>
<dbReference type="EMBL" id="CP001078">
    <property type="protein sequence ID" value="ACD54183.1"/>
    <property type="molecule type" value="Genomic_DNA"/>
</dbReference>
<dbReference type="RefSeq" id="WP_012451929.1">
    <property type="nucleotide sequence ID" value="NC_010723.1"/>
</dbReference>
<dbReference type="SMR" id="B2UW93"/>
<dbReference type="KEGG" id="cbt:CLH_2347"/>
<dbReference type="HOGENOM" id="CLU_043846_1_2_9"/>
<dbReference type="UniPathway" id="UPA00070">
    <property type="reaction ID" value="UER00116"/>
</dbReference>
<dbReference type="GO" id="GO:0016597">
    <property type="term" value="F:amino acid binding"/>
    <property type="evidence" value="ECO:0007669"/>
    <property type="project" value="InterPro"/>
</dbReference>
<dbReference type="GO" id="GO:0004070">
    <property type="term" value="F:aspartate carbamoyltransferase activity"/>
    <property type="evidence" value="ECO:0007669"/>
    <property type="project" value="UniProtKB-UniRule"/>
</dbReference>
<dbReference type="GO" id="GO:0006207">
    <property type="term" value="P:'de novo' pyrimidine nucleobase biosynthetic process"/>
    <property type="evidence" value="ECO:0007669"/>
    <property type="project" value="InterPro"/>
</dbReference>
<dbReference type="GO" id="GO:0044205">
    <property type="term" value="P:'de novo' UMP biosynthetic process"/>
    <property type="evidence" value="ECO:0007669"/>
    <property type="project" value="UniProtKB-UniRule"/>
</dbReference>
<dbReference type="GO" id="GO:0006520">
    <property type="term" value="P:amino acid metabolic process"/>
    <property type="evidence" value="ECO:0007669"/>
    <property type="project" value="InterPro"/>
</dbReference>
<dbReference type="FunFam" id="3.40.50.1370:FF:000002">
    <property type="entry name" value="Aspartate carbamoyltransferase 2"/>
    <property type="match status" value="1"/>
</dbReference>
<dbReference type="Gene3D" id="3.40.50.1370">
    <property type="entry name" value="Aspartate/ornithine carbamoyltransferase"/>
    <property type="match status" value="2"/>
</dbReference>
<dbReference type="HAMAP" id="MF_00001">
    <property type="entry name" value="Asp_carb_tr"/>
    <property type="match status" value="1"/>
</dbReference>
<dbReference type="InterPro" id="IPR006132">
    <property type="entry name" value="Asp/Orn_carbamoyltranf_P-bd"/>
</dbReference>
<dbReference type="InterPro" id="IPR006130">
    <property type="entry name" value="Asp/Orn_carbamoylTrfase"/>
</dbReference>
<dbReference type="InterPro" id="IPR036901">
    <property type="entry name" value="Asp/Orn_carbamoylTrfase_sf"/>
</dbReference>
<dbReference type="InterPro" id="IPR002082">
    <property type="entry name" value="Asp_carbamoyltransf"/>
</dbReference>
<dbReference type="InterPro" id="IPR006131">
    <property type="entry name" value="Asp_carbamoyltransf_Asp/Orn-bd"/>
</dbReference>
<dbReference type="NCBIfam" id="TIGR00670">
    <property type="entry name" value="asp_carb_tr"/>
    <property type="match status" value="1"/>
</dbReference>
<dbReference type="NCBIfam" id="NF002032">
    <property type="entry name" value="PRK00856.1"/>
    <property type="match status" value="1"/>
</dbReference>
<dbReference type="PANTHER" id="PTHR45753:SF6">
    <property type="entry name" value="ASPARTATE CARBAMOYLTRANSFERASE"/>
    <property type="match status" value="1"/>
</dbReference>
<dbReference type="PANTHER" id="PTHR45753">
    <property type="entry name" value="ORNITHINE CARBAMOYLTRANSFERASE, MITOCHONDRIAL"/>
    <property type="match status" value="1"/>
</dbReference>
<dbReference type="Pfam" id="PF00185">
    <property type="entry name" value="OTCace"/>
    <property type="match status" value="1"/>
</dbReference>
<dbReference type="Pfam" id="PF02729">
    <property type="entry name" value="OTCace_N"/>
    <property type="match status" value="1"/>
</dbReference>
<dbReference type="PRINTS" id="PR00100">
    <property type="entry name" value="AOTCASE"/>
</dbReference>
<dbReference type="PRINTS" id="PR00101">
    <property type="entry name" value="ATCASE"/>
</dbReference>
<dbReference type="SUPFAM" id="SSF53671">
    <property type="entry name" value="Aspartate/ornithine carbamoyltransferase"/>
    <property type="match status" value="1"/>
</dbReference>
<dbReference type="PROSITE" id="PS00097">
    <property type="entry name" value="CARBAMOYLTRANSFERASE"/>
    <property type="match status" value="1"/>
</dbReference>
<gene>
    <name evidence="1" type="primary">pyrB</name>
    <name type="ordered locus">CLH_2347</name>
</gene>
<comment type="function">
    <text evidence="1">Catalyzes the condensation of carbamoyl phosphate and aspartate to form carbamoyl aspartate and inorganic phosphate, the committed step in the de novo pyrimidine nucleotide biosynthesis pathway.</text>
</comment>
<comment type="catalytic activity">
    <reaction evidence="1">
        <text>carbamoyl phosphate + L-aspartate = N-carbamoyl-L-aspartate + phosphate + H(+)</text>
        <dbReference type="Rhea" id="RHEA:20013"/>
        <dbReference type="ChEBI" id="CHEBI:15378"/>
        <dbReference type="ChEBI" id="CHEBI:29991"/>
        <dbReference type="ChEBI" id="CHEBI:32814"/>
        <dbReference type="ChEBI" id="CHEBI:43474"/>
        <dbReference type="ChEBI" id="CHEBI:58228"/>
        <dbReference type="EC" id="2.1.3.2"/>
    </reaction>
</comment>
<comment type="pathway">
    <text evidence="1">Pyrimidine metabolism; UMP biosynthesis via de novo pathway; (S)-dihydroorotate from bicarbonate: step 2/3.</text>
</comment>
<comment type="subunit">
    <text evidence="1">Heterododecamer (2C3:3R2) of six catalytic PyrB chains organized as two trimers (C3), and six regulatory PyrI chains organized as three dimers (R2).</text>
</comment>
<comment type="similarity">
    <text evidence="1">Belongs to the aspartate/ornithine carbamoyltransferase superfamily. ATCase family.</text>
</comment>
<feature type="chain" id="PRO_1000088749" description="Aspartate carbamoyltransferase catalytic subunit">
    <location>
        <begin position="1"/>
        <end position="307"/>
    </location>
</feature>
<feature type="binding site" evidence="1">
    <location>
        <position position="54"/>
    </location>
    <ligand>
        <name>carbamoyl phosphate</name>
        <dbReference type="ChEBI" id="CHEBI:58228"/>
    </ligand>
</feature>
<feature type="binding site" evidence="1">
    <location>
        <position position="55"/>
    </location>
    <ligand>
        <name>carbamoyl phosphate</name>
        <dbReference type="ChEBI" id="CHEBI:58228"/>
    </ligand>
</feature>
<feature type="binding site" evidence="1">
    <location>
        <position position="83"/>
    </location>
    <ligand>
        <name>L-aspartate</name>
        <dbReference type="ChEBI" id="CHEBI:29991"/>
    </ligand>
</feature>
<feature type="binding site" evidence="1">
    <location>
        <position position="104"/>
    </location>
    <ligand>
        <name>carbamoyl phosphate</name>
        <dbReference type="ChEBI" id="CHEBI:58228"/>
    </ligand>
</feature>
<feature type="binding site" evidence="1">
    <location>
        <position position="132"/>
    </location>
    <ligand>
        <name>carbamoyl phosphate</name>
        <dbReference type="ChEBI" id="CHEBI:58228"/>
    </ligand>
</feature>
<feature type="binding site" evidence="1">
    <location>
        <position position="135"/>
    </location>
    <ligand>
        <name>carbamoyl phosphate</name>
        <dbReference type="ChEBI" id="CHEBI:58228"/>
    </ligand>
</feature>
<feature type="binding site" evidence="1">
    <location>
        <position position="165"/>
    </location>
    <ligand>
        <name>L-aspartate</name>
        <dbReference type="ChEBI" id="CHEBI:29991"/>
    </ligand>
</feature>
<feature type="binding site" evidence="1">
    <location>
        <position position="228"/>
    </location>
    <ligand>
        <name>L-aspartate</name>
        <dbReference type="ChEBI" id="CHEBI:29991"/>
    </ligand>
</feature>
<feature type="binding site" evidence="1">
    <location>
        <position position="267"/>
    </location>
    <ligand>
        <name>carbamoyl phosphate</name>
        <dbReference type="ChEBI" id="CHEBI:58228"/>
    </ligand>
</feature>
<feature type="binding site" evidence="1">
    <location>
        <position position="268"/>
    </location>
    <ligand>
        <name>carbamoyl phosphate</name>
        <dbReference type="ChEBI" id="CHEBI:58228"/>
    </ligand>
</feature>
<organism>
    <name type="scientific">Clostridium botulinum (strain Alaska E43 / Type E3)</name>
    <dbReference type="NCBI Taxonomy" id="508767"/>
    <lineage>
        <taxon>Bacteria</taxon>
        <taxon>Bacillati</taxon>
        <taxon>Bacillota</taxon>
        <taxon>Clostridia</taxon>
        <taxon>Eubacteriales</taxon>
        <taxon>Clostridiaceae</taxon>
        <taxon>Clostridium</taxon>
    </lineage>
</organism>
<protein>
    <recommendedName>
        <fullName evidence="1">Aspartate carbamoyltransferase catalytic subunit</fullName>
        <ecNumber evidence="1">2.1.3.2</ecNumber>
    </recommendedName>
    <alternativeName>
        <fullName evidence="1">Aspartate transcarbamylase</fullName>
        <shortName evidence="1">ATCase</shortName>
    </alternativeName>
</protein>